<sequence length="155" mass="16529">MGVQKSEVEATSSVSAEKLFKGLCLDIDTLLPRVLPGAIKSSETLEGDGGVGTVKLVHLGDASPFKTMKQKVDAIDKATFTYSYSIIDGDILLGFIESINNHFTAVPNADGGCTVKSTIIFNTKGDAVVPEENIKFANDQNLTIFKAVEAYLIAN</sequence>
<proteinExistence type="evidence at transcript level"/>
<comment type="similarity">
    <text evidence="1">Belongs to the BetVI family.</text>
</comment>
<keyword id="KW-0568">Pathogenesis-related protein</keyword>
<keyword id="KW-0611">Plant defense</keyword>
<feature type="chain" id="PRO_0000154163" description="Pathogenesis-related protein B">
    <location>
        <begin position="1"/>
        <end position="155"/>
    </location>
</feature>
<name>PR13_PETCR</name>
<protein>
    <recommendedName>
        <fullName>Pathogenesis-related protein B</fullName>
    </recommendedName>
    <alternativeName>
        <fullName>PR1-3</fullName>
    </alternativeName>
</protein>
<reference key="1">
    <citation type="journal article" date="1988" name="Mol. Gen. Genet.">
        <title>Gene structure and in situ transcript localization of pathogenesis-related protein 1 in parsley.</title>
        <authorList>
            <person name="Somssich I.E."/>
            <person name="Schmelzer E."/>
            <person name="Kawalleck P."/>
            <person name="Hahlbrock K."/>
        </authorList>
    </citation>
    <scope>NUCLEOTIDE SEQUENCE [MRNA]</scope>
</reference>
<organism>
    <name type="scientific">Petroselinum crispum</name>
    <name type="common">Parsley</name>
    <name type="synonym">Petroselinum hortense</name>
    <dbReference type="NCBI Taxonomy" id="4043"/>
    <lineage>
        <taxon>Eukaryota</taxon>
        <taxon>Viridiplantae</taxon>
        <taxon>Streptophyta</taxon>
        <taxon>Embryophyta</taxon>
        <taxon>Tracheophyta</taxon>
        <taxon>Spermatophyta</taxon>
        <taxon>Magnoliopsida</taxon>
        <taxon>eudicotyledons</taxon>
        <taxon>Gunneridae</taxon>
        <taxon>Pentapetalae</taxon>
        <taxon>asterids</taxon>
        <taxon>campanulids</taxon>
        <taxon>Apiales</taxon>
        <taxon>Apiaceae</taxon>
        <taxon>Apioideae</taxon>
        <taxon>apioid superclade</taxon>
        <taxon>Apieae</taxon>
        <taxon>Petroselinum</taxon>
    </lineage>
</organism>
<gene>
    <name type="primary">PCPR1-3</name>
</gene>
<evidence type="ECO:0000305" key="1"/>
<accession>P19418</accession>
<dbReference type="EMBL" id="X12573">
    <property type="protein sequence ID" value="CAA31085.1"/>
    <property type="molecule type" value="mRNA"/>
</dbReference>
<dbReference type="PIR" id="S04553">
    <property type="entry name" value="S04553"/>
</dbReference>
<dbReference type="SMR" id="P19418"/>
<dbReference type="GO" id="GO:0005737">
    <property type="term" value="C:cytoplasm"/>
    <property type="evidence" value="ECO:0007669"/>
    <property type="project" value="TreeGrafter"/>
</dbReference>
<dbReference type="GO" id="GO:0005634">
    <property type="term" value="C:nucleus"/>
    <property type="evidence" value="ECO:0007669"/>
    <property type="project" value="TreeGrafter"/>
</dbReference>
<dbReference type="GO" id="GO:0010427">
    <property type="term" value="F:abscisic acid binding"/>
    <property type="evidence" value="ECO:0007669"/>
    <property type="project" value="InterPro"/>
</dbReference>
<dbReference type="GO" id="GO:0004864">
    <property type="term" value="F:protein phosphatase inhibitor activity"/>
    <property type="evidence" value="ECO:0007669"/>
    <property type="project" value="InterPro"/>
</dbReference>
<dbReference type="GO" id="GO:0038023">
    <property type="term" value="F:signaling receptor activity"/>
    <property type="evidence" value="ECO:0007669"/>
    <property type="project" value="InterPro"/>
</dbReference>
<dbReference type="GO" id="GO:0009738">
    <property type="term" value="P:abscisic acid-activated signaling pathway"/>
    <property type="evidence" value="ECO:0007669"/>
    <property type="project" value="InterPro"/>
</dbReference>
<dbReference type="GO" id="GO:0006952">
    <property type="term" value="P:defense response"/>
    <property type="evidence" value="ECO:0007669"/>
    <property type="project" value="UniProtKB-KW"/>
</dbReference>
<dbReference type="CDD" id="cd07816">
    <property type="entry name" value="Bet_v1-like"/>
    <property type="match status" value="1"/>
</dbReference>
<dbReference type="FunFam" id="3.30.530.20:FF:000007">
    <property type="entry name" value="Major pollen allergen Bet v 1-A"/>
    <property type="match status" value="1"/>
</dbReference>
<dbReference type="Gene3D" id="3.30.530.20">
    <property type="match status" value="1"/>
</dbReference>
<dbReference type="InterPro" id="IPR000916">
    <property type="entry name" value="Bet_v_I/MLP"/>
</dbReference>
<dbReference type="InterPro" id="IPR024949">
    <property type="entry name" value="Bet_v_I_allergen"/>
</dbReference>
<dbReference type="InterPro" id="IPR050279">
    <property type="entry name" value="Plant_def-hormone_signal"/>
</dbReference>
<dbReference type="InterPro" id="IPR023393">
    <property type="entry name" value="START-like_dom_sf"/>
</dbReference>
<dbReference type="PANTHER" id="PTHR31213">
    <property type="entry name" value="OS08G0374000 PROTEIN-RELATED"/>
    <property type="match status" value="1"/>
</dbReference>
<dbReference type="PANTHER" id="PTHR31213:SF55">
    <property type="entry name" value="STRESS-INDUCED PROTEIN SAM22"/>
    <property type="match status" value="1"/>
</dbReference>
<dbReference type="Pfam" id="PF00407">
    <property type="entry name" value="Bet_v_1"/>
    <property type="match status" value="1"/>
</dbReference>
<dbReference type="PRINTS" id="PR00634">
    <property type="entry name" value="BETALLERGEN"/>
</dbReference>
<dbReference type="SMART" id="SM01037">
    <property type="entry name" value="Bet_v_1"/>
    <property type="match status" value="1"/>
</dbReference>
<dbReference type="SUPFAM" id="SSF55961">
    <property type="entry name" value="Bet v1-like"/>
    <property type="match status" value="1"/>
</dbReference>
<dbReference type="PROSITE" id="PS00451">
    <property type="entry name" value="PATHOGENESIS_BETVI"/>
    <property type="match status" value="1"/>
</dbReference>